<name>AROK_BRUA2</name>
<evidence type="ECO:0000255" key="1">
    <source>
        <dbReference type="HAMAP-Rule" id="MF_00109"/>
    </source>
</evidence>
<keyword id="KW-0028">Amino-acid biosynthesis</keyword>
<keyword id="KW-0057">Aromatic amino acid biosynthesis</keyword>
<keyword id="KW-0067">ATP-binding</keyword>
<keyword id="KW-0963">Cytoplasm</keyword>
<keyword id="KW-0418">Kinase</keyword>
<keyword id="KW-0460">Magnesium</keyword>
<keyword id="KW-0479">Metal-binding</keyword>
<keyword id="KW-0547">Nucleotide-binding</keyword>
<keyword id="KW-1185">Reference proteome</keyword>
<keyword id="KW-0808">Transferase</keyword>
<comment type="function">
    <text evidence="1">Catalyzes the specific phosphorylation of the 3-hydroxyl group of shikimic acid using ATP as a cosubstrate.</text>
</comment>
<comment type="catalytic activity">
    <reaction evidence="1">
        <text>shikimate + ATP = 3-phosphoshikimate + ADP + H(+)</text>
        <dbReference type="Rhea" id="RHEA:13121"/>
        <dbReference type="ChEBI" id="CHEBI:15378"/>
        <dbReference type="ChEBI" id="CHEBI:30616"/>
        <dbReference type="ChEBI" id="CHEBI:36208"/>
        <dbReference type="ChEBI" id="CHEBI:145989"/>
        <dbReference type="ChEBI" id="CHEBI:456216"/>
        <dbReference type="EC" id="2.7.1.71"/>
    </reaction>
</comment>
<comment type="cofactor">
    <cofactor evidence="1">
        <name>Mg(2+)</name>
        <dbReference type="ChEBI" id="CHEBI:18420"/>
    </cofactor>
    <text evidence="1">Binds 1 Mg(2+) ion per subunit.</text>
</comment>
<comment type="pathway">
    <text evidence="1">Metabolic intermediate biosynthesis; chorismate biosynthesis; chorismate from D-erythrose 4-phosphate and phosphoenolpyruvate: step 5/7.</text>
</comment>
<comment type="subunit">
    <text evidence="1">Monomer.</text>
</comment>
<comment type="subcellular location">
    <subcellularLocation>
        <location evidence="1">Cytoplasm</location>
    </subcellularLocation>
</comment>
<comment type="similarity">
    <text evidence="1">Belongs to the shikimate kinase family.</text>
</comment>
<dbReference type="EC" id="2.7.1.71" evidence="1"/>
<dbReference type="EMBL" id="AM040264">
    <property type="protein sequence ID" value="CAJ11986.1"/>
    <property type="molecule type" value="Genomic_DNA"/>
</dbReference>
<dbReference type="RefSeq" id="WP_002971869.1">
    <property type="nucleotide sequence ID" value="NZ_KN046823.1"/>
</dbReference>
<dbReference type="SMR" id="Q2YR42"/>
<dbReference type="STRING" id="359391.BAB1_2030"/>
<dbReference type="KEGG" id="bmf:BAB1_2030"/>
<dbReference type="PATRIC" id="fig|359391.11.peg.1264"/>
<dbReference type="HOGENOM" id="CLU_057607_2_0_5"/>
<dbReference type="PhylomeDB" id="Q2YR42"/>
<dbReference type="UniPathway" id="UPA00053">
    <property type="reaction ID" value="UER00088"/>
</dbReference>
<dbReference type="Proteomes" id="UP000002719">
    <property type="component" value="Chromosome I"/>
</dbReference>
<dbReference type="GO" id="GO:0005829">
    <property type="term" value="C:cytosol"/>
    <property type="evidence" value="ECO:0007669"/>
    <property type="project" value="TreeGrafter"/>
</dbReference>
<dbReference type="GO" id="GO:0005524">
    <property type="term" value="F:ATP binding"/>
    <property type="evidence" value="ECO:0007669"/>
    <property type="project" value="UniProtKB-UniRule"/>
</dbReference>
<dbReference type="GO" id="GO:0000287">
    <property type="term" value="F:magnesium ion binding"/>
    <property type="evidence" value="ECO:0007669"/>
    <property type="project" value="UniProtKB-UniRule"/>
</dbReference>
<dbReference type="GO" id="GO:0004765">
    <property type="term" value="F:shikimate kinase activity"/>
    <property type="evidence" value="ECO:0007669"/>
    <property type="project" value="UniProtKB-UniRule"/>
</dbReference>
<dbReference type="GO" id="GO:0008652">
    <property type="term" value="P:amino acid biosynthetic process"/>
    <property type="evidence" value="ECO:0007669"/>
    <property type="project" value="UniProtKB-KW"/>
</dbReference>
<dbReference type="GO" id="GO:0009073">
    <property type="term" value="P:aromatic amino acid family biosynthetic process"/>
    <property type="evidence" value="ECO:0007669"/>
    <property type="project" value="UniProtKB-KW"/>
</dbReference>
<dbReference type="GO" id="GO:0009423">
    <property type="term" value="P:chorismate biosynthetic process"/>
    <property type="evidence" value="ECO:0007669"/>
    <property type="project" value="UniProtKB-UniRule"/>
</dbReference>
<dbReference type="CDD" id="cd00464">
    <property type="entry name" value="SK"/>
    <property type="match status" value="1"/>
</dbReference>
<dbReference type="Gene3D" id="3.40.50.300">
    <property type="entry name" value="P-loop containing nucleotide triphosphate hydrolases"/>
    <property type="match status" value="1"/>
</dbReference>
<dbReference type="HAMAP" id="MF_00109">
    <property type="entry name" value="Shikimate_kinase"/>
    <property type="match status" value="1"/>
</dbReference>
<dbReference type="InterPro" id="IPR027417">
    <property type="entry name" value="P-loop_NTPase"/>
</dbReference>
<dbReference type="InterPro" id="IPR031322">
    <property type="entry name" value="Shikimate/glucono_kinase"/>
</dbReference>
<dbReference type="InterPro" id="IPR000623">
    <property type="entry name" value="Shikimate_kinase/TSH1"/>
</dbReference>
<dbReference type="NCBIfam" id="NF010552">
    <property type="entry name" value="PRK13946.1"/>
    <property type="match status" value="1"/>
</dbReference>
<dbReference type="PANTHER" id="PTHR21087">
    <property type="entry name" value="SHIKIMATE KINASE"/>
    <property type="match status" value="1"/>
</dbReference>
<dbReference type="PANTHER" id="PTHR21087:SF16">
    <property type="entry name" value="SHIKIMATE KINASE 1, CHLOROPLASTIC"/>
    <property type="match status" value="1"/>
</dbReference>
<dbReference type="Pfam" id="PF01202">
    <property type="entry name" value="SKI"/>
    <property type="match status" value="1"/>
</dbReference>
<dbReference type="PRINTS" id="PR01100">
    <property type="entry name" value="SHIKIMTKNASE"/>
</dbReference>
<dbReference type="SUPFAM" id="SSF52540">
    <property type="entry name" value="P-loop containing nucleoside triphosphate hydrolases"/>
    <property type="match status" value="1"/>
</dbReference>
<gene>
    <name evidence="1" type="primary">aroK</name>
    <name type="ordered locus">BAB1_2030</name>
</gene>
<reference key="1">
    <citation type="journal article" date="2005" name="Infect. Immun.">
        <title>Whole-genome analyses of speciation events in pathogenic Brucellae.</title>
        <authorList>
            <person name="Chain P.S."/>
            <person name="Comerci D.J."/>
            <person name="Tolmasky M.E."/>
            <person name="Larimer F.W."/>
            <person name="Malfatti S.A."/>
            <person name="Vergez L.M."/>
            <person name="Aguero F."/>
            <person name="Land M.L."/>
            <person name="Ugalde R.A."/>
            <person name="Garcia E."/>
        </authorList>
    </citation>
    <scope>NUCLEOTIDE SEQUENCE [LARGE SCALE GENOMIC DNA]</scope>
    <source>
        <strain>2308</strain>
    </source>
</reference>
<sequence>MSGTNKQTNLHRQTETIRQLLGSKVVVLVGLMGAGKSTIGRKVANMLNLPFKDADTEIETVSRMTVAELFEAYGEVEFRDLERRVILRLLDDGPMVLATGGGAYMNAETRAAIAEAGISIWINADLDVLMERVSRRQNRPLLRNSDPRGVMQRLMDERYPVYALAELHLMTRDEKKEVIAAELIEVLAAHLEKEQAASAG</sequence>
<accession>Q2YR42</accession>
<protein>
    <recommendedName>
        <fullName evidence="1">Shikimate kinase</fullName>
        <shortName evidence="1">SK</shortName>
        <ecNumber evidence="1">2.7.1.71</ecNumber>
    </recommendedName>
</protein>
<feature type="chain" id="PRO_0000237855" description="Shikimate kinase">
    <location>
        <begin position="1"/>
        <end position="200"/>
    </location>
</feature>
<feature type="binding site" evidence="1">
    <location>
        <begin position="33"/>
        <end position="38"/>
    </location>
    <ligand>
        <name>ATP</name>
        <dbReference type="ChEBI" id="CHEBI:30616"/>
    </ligand>
</feature>
<feature type="binding site" evidence="1">
    <location>
        <position position="37"/>
    </location>
    <ligand>
        <name>Mg(2+)</name>
        <dbReference type="ChEBI" id="CHEBI:18420"/>
    </ligand>
</feature>
<feature type="binding site" evidence="1">
    <location>
        <position position="55"/>
    </location>
    <ligand>
        <name>substrate</name>
    </ligand>
</feature>
<feature type="binding site" evidence="1">
    <location>
        <position position="79"/>
    </location>
    <ligand>
        <name>substrate</name>
    </ligand>
</feature>
<feature type="binding site" evidence="1">
    <location>
        <position position="101"/>
    </location>
    <ligand>
        <name>substrate</name>
    </ligand>
</feature>
<feature type="binding site" evidence="1">
    <location>
        <position position="139"/>
    </location>
    <ligand>
        <name>ATP</name>
        <dbReference type="ChEBI" id="CHEBI:30616"/>
    </ligand>
</feature>
<feature type="binding site" evidence="1">
    <location>
        <position position="158"/>
    </location>
    <ligand>
        <name>substrate</name>
    </ligand>
</feature>
<organism>
    <name type="scientific">Brucella abortus (strain 2308)</name>
    <dbReference type="NCBI Taxonomy" id="359391"/>
    <lineage>
        <taxon>Bacteria</taxon>
        <taxon>Pseudomonadati</taxon>
        <taxon>Pseudomonadota</taxon>
        <taxon>Alphaproteobacteria</taxon>
        <taxon>Hyphomicrobiales</taxon>
        <taxon>Brucellaceae</taxon>
        <taxon>Brucella/Ochrobactrum group</taxon>
        <taxon>Brucella</taxon>
    </lineage>
</organism>
<proteinExistence type="inferred from homology"/>